<dbReference type="EMBL" id="CP000812">
    <property type="protein sequence ID" value="ABV34048.1"/>
    <property type="molecule type" value="Genomic_DNA"/>
</dbReference>
<dbReference type="SMR" id="A8F7B4"/>
<dbReference type="STRING" id="416591.Tlet_1492"/>
<dbReference type="KEGG" id="tle:Tlet_1492"/>
<dbReference type="eggNOG" id="COG4974">
    <property type="taxonomic scope" value="Bacteria"/>
</dbReference>
<dbReference type="HOGENOM" id="CLU_027562_9_6_0"/>
<dbReference type="OrthoDB" id="9785687at2"/>
<dbReference type="Proteomes" id="UP000002016">
    <property type="component" value="Chromosome"/>
</dbReference>
<dbReference type="GO" id="GO:0005737">
    <property type="term" value="C:cytoplasm"/>
    <property type="evidence" value="ECO:0007669"/>
    <property type="project" value="UniProtKB-SubCell"/>
</dbReference>
<dbReference type="GO" id="GO:0003677">
    <property type="term" value="F:DNA binding"/>
    <property type="evidence" value="ECO:0007669"/>
    <property type="project" value="UniProtKB-KW"/>
</dbReference>
<dbReference type="GO" id="GO:0051301">
    <property type="term" value="P:cell division"/>
    <property type="evidence" value="ECO:0007669"/>
    <property type="project" value="UniProtKB-KW"/>
</dbReference>
<dbReference type="GO" id="GO:0007059">
    <property type="term" value="P:chromosome segregation"/>
    <property type="evidence" value="ECO:0007669"/>
    <property type="project" value="UniProtKB-KW"/>
</dbReference>
<dbReference type="GO" id="GO:0015074">
    <property type="term" value="P:DNA integration"/>
    <property type="evidence" value="ECO:0007669"/>
    <property type="project" value="UniProtKB-KW"/>
</dbReference>
<dbReference type="GO" id="GO:0006310">
    <property type="term" value="P:DNA recombination"/>
    <property type="evidence" value="ECO:0007669"/>
    <property type="project" value="UniProtKB-KW"/>
</dbReference>
<dbReference type="CDD" id="cd01193">
    <property type="entry name" value="INT_IntI_C"/>
    <property type="match status" value="1"/>
</dbReference>
<dbReference type="Gene3D" id="1.10.150.130">
    <property type="match status" value="1"/>
</dbReference>
<dbReference type="Gene3D" id="1.10.443.10">
    <property type="entry name" value="Intergrase catalytic core"/>
    <property type="match status" value="1"/>
</dbReference>
<dbReference type="InterPro" id="IPR044068">
    <property type="entry name" value="CB"/>
</dbReference>
<dbReference type="InterPro" id="IPR011010">
    <property type="entry name" value="DNA_brk_join_enz"/>
</dbReference>
<dbReference type="InterPro" id="IPR013762">
    <property type="entry name" value="Integrase-like_cat_sf"/>
</dbReference>
<dbReference type="InterPro" id="IPR002104">
    <property type="entry name" value="Integrase_catalytic"/>
</dbReference>
<dbReference type="InterPro" id="IPR010998">
    <property type="entry name" value="Integrase_recombinase_N"/>
</dbReference>
<dbReference type="InterPro" id="IPR004107">
    <property type="entry name" value="Integrase_SAM-like_N"/>
</dbReference>
<dbReference type="InterPro" id="IPR050090">
    <property type="entry name" value="Tyrosine_recombinase_XerCD"/>
</dbReference>
<dbReference type="NCBIfam" id="NF040815">
    <property type="entry name" value="recomb_XerA_Arch"/>
    <property type="match status" value="1"/>
</dbReference>
<dbReference type="PANTHER" id="PTHR30349:SF41">
    <property type="entry name" value="INTEGRASE_RECOMBINASE PROTEIN MJ0367-RELATED"/>
    <property type="match status" value="1"/>
</dbReference>
<dbReference type="PANTHER" id="PTHR30349">
    <property type="entry name" value="PHAGE INTEGRASE-RELATED"/>
    <property type="match status" value="1"/>
</dbReference>
<dbReference type="Pfam" id="PF02899">
    <property type="entry name" value="Phage_int_SAM_1"/>
    <property type="match status" value="1"/>
</dbReference>
<dbReference type="Pfam" id="PF00589">
    <property type="entry name" value="Phage_integrase"/>
    <property type="match status" value="1"/>
</dbReference>
<dbReference type="SUPFAM" id="SSF56349">
    <property type="entry name" value="DNA breaking-rejoining enzymes"/>
    <property type="match status" value="1"/>
</dbReference>
<dbReference type="PROSITE" id="PS51900">
    <property type="entry name" value="CB"/>
    <property type="match status" value="1"/>
</dbReference>
<dbReference type="PROSITE" id="PS51898">
    <property type="entry name" value="TYR_RECOMBINASE"/>
    <property type="match status" value="1"/>
</dbReference>
<name>XER_PSELT</name>
<reference key="1">
    <citation type="submission" date="2007-08" db="EMBL/GenBank/DDBJ databases">
        <title>Complete sequence of Thermotoga lettingae TMO.</title>
        <authorList>
            <consortium name="US DOE Joint Genome Institute"/>
            <person name="Copeland A."/>
            <person name="Lucas S."/>
            <person name="Lapidus A."/>
            <person name="Barry K."/>
            <person name="Glavina del Rio T."/>
            <person name="Dalin E."/>
            <person name="Tice H."/>
            <person name="Pitluck S."/>
            <person name="Foster B."/>
            <person name="Bruce D."/>
            <person name="Schmutz J."/>
            <person name="Larimer F."/>
            <person name="Land M."/>
            <person name="Hauser L."/>
            <person name="Kyrpides N."/>
            <person name="Mikhailova N."/>
            <person name="Nelson K."/>
            <person name="Gogarten J.P."/>
            <person name="Noll K."/>
            <person name="Richardson P."/>
        </authorList>
    </citation>
    <scope>NUCLEOTIDE SEQUENCE [LARGE SCALE GENOMIC DNA]</scope>
    <source>
        <strain>ATCC BAA-301 / DSM 14385 / NBRC 107922 / TMO</strain>
    </source>
</reference>
<accession>A8F7B4</accession>
<keyword id="KW-0131">Cell cycle</keyword>
<keyword id="KW-0132">Cell division</keyword>
<keyword id="KW-0159">Chromosome partition</keyword>
<keyword id="KW-0963">Cytoplasm</keyword>
<keyword id="KW-0229">DNA integration</keyword>
<keyword id="KW-0233">DNA recombination</keyword>
<keyword id="KW-0238">DNA-binding</keyword>
<keyword id="KW-1185">Reference proteome</keyword>
<protein>
    <recommendedName>
        <fullName evidence="4">Tyrosine recombinase Tlet_1492</fullName>
    </recommendedName>
</protein>
<feature type="chain" id="PRO_1000215962" description="Tyrosine recombinase Tlet_1492">
    <location>
        <begin position="1"/>
        <end position="286"/>
    </location>
</feature>
<feature type="domain" description="Core-binding (CB)" evidence="3">
    <location>
        <begin position="1"/>
        <end position="86"/>
    </location>
</feature>
<feature type="domain" description="Tyr recombinase" evidence="2">
    <location>
        <begin position="107"/>
        <end position="280"/>
    </location>
</feature>
<feature type="active site" evidence="2">
    <location>
        <position position="143"/>
    </location>
</feature>
<feature type="active site" evidence="2">
    <location>
        <position position="168"/>
    </location>
</feature>
<feature type="active site" evidence="2">
    <location>
        <position position="232"/>
    </location>
</feature>
<feature type="active site" evidence="2">
    <location>
        <position position="235"/>
    </location>
</feature>
<feature type="active site" evidence="2">
    <location>
        <position position="258"/>
    </location>
</feature>
<feature type="active site" description="O-(3'-phospho-DNA)-tyrosine intermediate" evidence="2">
    <location>
        <position position="267"/>
    </location>
</feature>
<comment type="function">
    <text evidence="1">Site-specific tyrosine recombinase, which acts by catalyzing the cutting and rejoining of the recombining DNA molecules.</text>
</comment>
<comment type="subcellular location">
    <subcellularLocation>
        <location evidence="4">Cytoplasm</location>
    </subcellularLocation>
</comment>
<comment type="similarity">
    <text evidence="4">Belongs to the 'phage' integrase family.</text>
</comment>
<gene>
    <name type="ordered locus">Tlet_1492</name>
</gene>
<proteinExistence type="inferred from homology"/>
<sequence length="286" mass="33265">MERILQNFSDYLMHVRRLSDHTVVAYVGDVKQFLCFLIENDIELKDVSRLHIEEYIKKLSKQKTKLNSTSLARKISSLRSFFNYLQLTSIKDENPVEGIRNPKIRRRIPDFLLPSEIQKLLEFSMKNQRDYLMLSLLYFCGLRVSELCNLRVEDLSFSPAFVKITMGKGKKDRIVPLTSKLAEKLENYITSCGKSPEDYLFGSQIKIHPSTVFRIVRKYTMMCGIKKRIHPHTLRHTFATHLLQKGVNIRVVQDLLGHSNLSTTSVYLHVVDQEKFDAINKLLQEG</sequence>
<organism>
    <name type="scientific">Pseudothermotoga lettingae (strain ATCC BAA-301 / DSM 14385 / NBRC 107922 / TMO)</name>
    <name type="common">Thermotoga lettingae</name>
    <dbReference type="NCBI Taxonomy" id="416591"/>
    <lineage>
        <taxon>Bacteria</taxon>
        <taxon>Thermotogati</taxon>
        <taxon>Thermotogota</taxon>
        <taxon>Thermotogae</taxon>
        <taxon>Thermotogales</taxon>
        <taxon>Thermotogaceae</taxon>
        <taxon>Pseudothermotoga</taxon>
    </lineage>
</organism>
<evidence type="ECO:0000250" key="1">
    <source>
        <dbReference type="UniProtKB" id="P0A8P8"/>
    </source>
</evidence>
<evidence type="ECO:0000255" key="2">
    <source>
        <dbReference type="PROSITE-ProRule" id="PRU01246"/>
    </source>
</evidence>
<evidence type="ECO:0000255" key="3">
    <source>
        <dbReference type="PROSITE-ProRule" id="PRU01248"/>
    </source>
</evidence>
<evidence type="ECO:0000305" key="4"/>